<gene>
    <name type="ordered locus">Aflv_1588</name>
</gene>
<accession>B7GJU0</accession>
<sequence length="105" mass="11272">MIVTTTNSIEGKQIEQYLGLVSGEVILGANVVRDFLASITDIIGGRSGTYESKLAEGREMAVQEMVKKARNMGANAVIGVDLDFETLRDGMMMCIATGTAVKLKE</sequence>
<feature type="chain" id="PRO_1000119979" description="UPF0145 protein Aflv_1588">
    <location>
        <begin position="1"/>
        <end position="105"/>
    </location>
</feature>
<organism>
    <name type="scientific">Anoxybacillus flavithermus (strain DSM 21510 / WK1)</name>
    <dbReference type="NCBI Taxonomy" id="491915"/>
    <lineage>
        <taxon>Bacteria</taxon>
        <taxon>Bacillati</taxon>
        <taxon>Bacillota</taxon>
        <taxon>Bacilli</taxon>
        <taxon>Bacillales</taxon>
        <taxon>Anoxybacillaceae</taxon>
        <taxon>Anoxybacillus</taxon>
    </lineage>
</organism>
<evidence type="ECO:0000255" key="1">
    <source>
        <dbReference type="HAMAP-Rule" id="MF_00338"/>
    </source>
</evidence>
<reference key="1">
    <citation type="journal article" date="2008" name="Genome Biol.">
        <title>Encapsulated in silica: genome, proteome and physiology of the thermophilic bacterium Anoxybacillus flavithermus WK1.</title>
        <authorList>
            <person name="Saw J.H."/>
            <person name="Mountain B.W."/>
            <person name="Feng L."/>
            <person name="Omelchenko M.V."/>
            <person name="Hou S."/>
            <person name="Saito J.A."/>
            <person name="Stott M.B."/>
            <person name="Li D."/>
            <person name="Zhao G."/>
            <person name="Wu J."/>
            <person name="Galperin M.Y."/>
            <person name="Koonin E.V."/>
            <person name="Makarova K.S."/>
            <person name="Wolf Y.I."/>
            <person name="Rigden D.J."/>
            <person name="Dunfield P.F."/>
            <person name="Wang L."/>
            <person name="Alam M."/>
        </authorList>
    </citation>
    <scope>NUCLEOTIDE SEQUENCE [LARGE SCALE GENOMIC DNA]</scope>
    <source>
        <strain>DSM 21510 / WK1</strain>
    </source>
</reference>
<proteinExistence type="inferred from homology"/>
<dbReference type="EMBL" id="CP000922">
    <property type="protein sequence ID" value="ACJ33953.1"/>
    <property type="molecule type" value="Genomic_DNA"/>
</dbReference>
<dbReference type="RefSeq" id="WP_006321821.1">
    <property type="nucleotide sequence ID" value="NC_011567.1"/>
</dbReference>
<dbReference type="SMR" id="B7GJU0"/>
<dbReference type="STRING" id="491915.Aflv_1588"/>
<dbReference type="GeneID" id="7037843"/>
<dbReference type="KEGG" id="afl:Aflv_1588"/>
<dbReference type="eggNOG" id="COG0393">
    <property type="taxonomic scope" value="Bacteria"/>
</dbReference>
<dbReference type="HOGENOM" id="CLU_117144_3_2_9"/>
<dbReference type="Proteomes" id="UP000000742">
    <property type="component" value="Chromosome"/>
</dbReference>
<dbReference type="Gene3D" id="3.30.110.70">
    <property type="entry name" value="Hypothetical protein apc22750. Chain B"/>
    <property type="match status" value="1"/>
</dbReference>
<dbReference type="HAMAP" id="MF_00338">
    <property type="entry name" value="UPF0145"/>
    <property type="match status" value="1"/>
</dbReference>
<dbReference type="InterPro" id="IPR035439">
    <property type="entry name" value="UPF0145_dom_sf"/>
</dbReference>
<dbReference type="InterPro" id="IPR002765">
    <property type="entry name" value="UPF0145_YbjQ-like"/>
</dbReference>
<dbReference type="PANTHER" id="PTHR34068">
    <property type="entry name" value="UPF0145 PROTEIN YBJQ"/>
    <property type="match status" value="1"/>
</dbReference>
<dbReference type="PANTHER" id="PTHR34068:SF1">
    <property type="entry name" value="UPF0145 PROTEIN YBJQ"/>
    <property type="match status" value="1"/>
</dbReference>
<dbReference type="Pfam" id="PF01906">
    <property type="entry name" value="YbjQ_1"/>
    <property type="match status" value="1"/>
</dbReference>
<dbReference type="SUPFAM" id="SSF117782">
    <property type="entry name" value="YbjQ-like"/>
    <property type="match status" value="1"/>
</dbReference>
<comment type="similarity">
    <text evidence="1">Belongs to the UPF0145 family.</text>
</comment>
<name>Y1588_ANOFW</name>
<protein>
    <recommendedName>
        <fullName evidence="1">UPF0145 protein Aflv_1588</fullName>
    </recommendedName>
</protein>